<organism>
    <name type="scientific">Xenopus laevis</name>
    <name type="common">African clawed frog</name>
    <dbReference type="NCBI Taxonomy" id="8355"/>
    <lineage>
        <taxon>Eukaryota</taxon>
        <taxon>Metazoa</taxon>
        <taxon>Chordata</taxon>
        <taxon>Craniata</taxon>
        <taxon>Vertebrata</taxon>
        <taxon>Euteleostomi</taxon>
        <taxon>Amphibia</taxon>
        <taxon>Batrachia</taxon>
        <taxon>Anura</taxon>
        <taxon>Pipoidea</taxon>
        <taxon>Pipidae</taxon>
        <taxon>Xenopodinae</taxon>
        <taxon>Xenopus</taxon>
        <taxon>Xenopus</taxon>
    </lineage>
</organism>
<sequence length="1259" mass="144054">MEAKKDSARRLRSIDRTRYAEHEDLSDVEDMVSIRGFSLEQKVSCNAYRGNFVRYMEGKDFTYEYVQREALQTPLLFSTKEGLGIKMPEQDFTVRDVKLLVGSRRVVDVMDVNTQKSIDMSMSQFVRYYETPEMEREKLYNVISLEFSHTKLERVVKRPTVVDAVDWVDNMWPRHLKEQQKESTNVIAEMKYPKVKKYCLMSVKGCYTDFHIDFGGTSVWYHVFRGGKVFWLIPPTGHNLQLYEEWLLSGKQTDIFLGDRSEGCQRIELKQGQTFFIPSGWIHAVYTPADSLVFGGNILHSFNIPMQLRVFEIEDRTRVNAKFRYPFYYEMCWYVLERYVCTLTKRSHLIKEYQRESMITDRKPSLDSHSSDSWLEMEEESCDIHIKEEKGNLVEKPSKQSGDESSTTNSTHSNGKDAAEKKQKATLMQQLKRTLSNDSDESSKSIVHSDFPKTPTGSPATDMPCKLTHLTEFELKGLKALVEKLESLPENKKCVPEGIEDPQALLEDMKTVLKEHADDDNNLAISGVPVVMWPKKPSKNRAVGRPKGKIASSPAVKLSANRTSAGARRRRTRCRKCEACLRTECGECHFCKDMKKFGGPGRMKQSCIMRQCIAPVLPHTAVCLVCGEAGKEDCVEGQEAKFNVMLMECSICNEIIHPGCLKTKESDGVVNDELPNCWECPKCNHAGKTGKVYKQKRGPGFKYASNLPGSLLKEQKVNRDNKELTEIVKKKVEREETPKQIPEEQPKKKPTEGIIKKKPEDGHVRKKRKFEKPPDPSVRKRLKLVKEEKLLRKKRRSWKTPDERAMMAKTLRRIKQEPDDDLTEAAPKAKESDQSRSSSPTAGPSTEGSEPKEKKKIRRKRRVSNKELSKELSKELNQEIQKTESSLASENHHPIKSEPESDNEESKKCISTNGERMHNFSKGLNGTPKELRHELFPSLKTTPRANNRPPPSLSPPKCMQMERHVIRPPPISPPPDSLPLANGAAHVMQREVWMAIFSYLSHRDLCICMRICRTWNRWCCDKRLWTQIDLNRCKSITPLMLSGIIRRQPASLDLSWTNISKKQLSWLINRLPALRDLNLSGCSWIAVSALCSSCCPLLRTLNVQWVEGLKDAQMRDLLSPPTDNRPGQIDNRSKLRNITELRLAGLDITDASLRLMIRHMPLLAKLDLSYCNHVTDQSINLLTAVGTSTRDTLLEMNLSDCNNVTDQCLTFFKRCGNICLIDLRFCKQVSKESCEQFIAEMSVIVQFGQTEEKLLQKVS</sequence>
<keyword id="KW-0025">Alternative splicing</keyword>
<keyword id="KW-0156">Chromatin regulator</keyword>
<keyword id="KW-0158">Chromosome</keyword>
<keyword id="KW-0175">Coiled coil</keyword>
<keyword id="KW-0223">Dioxygenase</keyword>
<keyword id="KW-0238">DNA-binding</keyword>
<keyword id="KW-0408">Iron</keyword>
<keyword id="KW-0433">Leucine-rich repeat</keyword>
<keyword id="KW-0479">Metal-binding</keyword>
<keyword id="KW-0539">Nucleus</keyword>
<keyword id="KW-0560">Oxidoreductase</keyword>
<keyword id="KW-0597">Phosphoprotein</keyword>
<keyword id="KW-1185">Reference proteome</keyword>
<keyword id="KW-0677">Repeat</keyword>
<keyword id="KW-0678">Repressor</keyword>
<keyword id="KW-0694">RNA-binding</keyword>
<keyword id="KW-0699">rRNA-binding</keyword>
<keyword id="KW-0804">Transcription</keyword>
<keyword id="KW-0805">Transcription regulation</keyword>
<keyword id="KW-0862">Zinc</keyword>
<keyword id="KW-0863">Zinc-finger</keyword>
<accession>Q640I9</accession>
<accession>Q6GNT8</accession>
<proteinExistence type="evidence at transcript level"/>
<comment type="function">
    <text evidence="2">Histone demethylase that demethylates 'Lys-4' and 'Lys-36' of histone H3, thereby playing a central role in histone code. Preferentially demethylates trimethylated H3 'Lys-4' and dimethylated H3 'Lys-36' residue while it has weak or no activity for mono- and tri-methylated H3 'Lys-36'. Preferentially binds the transcribed region of ribosomal RNA and represses the transcription of ribosomal RNA genes which inhibits cell growth and proliferation (By similarity).</text>
</comment>
<comment type="catalytic activity">
    <reaction evidence="2">
        <text>N(6),N(6)-dimethyl-L-lysyl(36)-[histone H3] + 2 2-oxoglutarate + 2 O2 = L-lysyl(36)-[histone H3] + 2 formaldehyde + 2 succinate + 2 CO2</text>
        <dbReference type="Rhea" id="RHEA:42032"/>
        <dbReference type="Rhea" id="RHEA-COMP:9785"/>
        <dbReference type="Rhea" id="RHEA-COMP:9787"/>
        <dbReference type="ChEBI" id="CHEBI:15379"/>
        <dbReference type="ChEBI" id="CHEBI:16526"/>
        <dbReference type="ChEBI" id="CHEBI:16810"/>
        <dbReference type="ChEBI" id="CHEBI:16842"/>
        <dbReference type="ChEBI" id="CHEBI:29969"/>
        <dbReference type="ChEBI" id="CHEBI:30031"/>
        <dbReference type="ChEBI" id="CHEBI:61976"/>
        <dbReference type="EC" id="1.14.11.27"/>
    </reaction>
</comment>
<comment type="cofactor">
    <cofactor evidence="2">
        <name>Fe(2+)</name>
        <dbReference type="ChEBI" id="CHEBI:29033"/>
    </cofactor>
    <text evidence="3">Binds 1 Fe(2+) ion per subunit.</text>
</comment>
<comment type="activity regulation">
    <text evidence="2">Histone demethylase activity is inhibited by fumarate.</text>
</comment>
<comment type="subcellular location">
    <subcellularLocation>
        <location evidence="2">Nucleus</location>
        <location evidence="2">Nucleolus</location>
    </subcellularLocation>
    <subcellularLocation>
        <location evidence="2">Nucleus</location>
    </subcellularLocation>
    <subcellularLocation>
        <location evidence="2">Chromosome</location>
    </subcellularLocation>
</comment>
<comment type="alternative products">
    <event type="alternative splicing"/>
    <isoform>
        <id>Q640I9-1</id>
        <name>1</name>
        <sequence type="displayed"/>
    </isoform>
    <isoform>
        <id>Q640I9-2</id>
        <name>2</name>
        <sequence type="described" ref="VSP_017479 VSP_017480"/>
    </isoform>
</comment>
<comment type="domain">
    <text evidence="2">The CXXC zinc finger mediates binding to DNA containing unmethylated cytidine-phosphate-guanosine (CpG) dinucleotides.</text>
</comment>
<comment type="domain">
    <text evidence="1">The JmjC domain mediates demethylation activity. It is also required for repression of ribosomal RNA genes (By similarity).</text>
</comment>
<comment type="similarity">
    <text evidence="10">Belongs to the JHDM1 histone demethylase family.</text>
</comment>
<dbReference type="EC" id="1.14.11.27" evidence="2"/>
<dbReference type="EMBL" id="BC073414">
    <property type="protein sequence ID" value="AAH73414.1"/>
    <property type="molecule type" value="mRNA"/>
</dbReference>
<dbReference type="EMBL" id="BC082636">
    <property type="protein sequence ID" value="AAH82636.1"/>
    <property type="molecule type" value="mRNA"/>
</dbReference>
<dbReference type="SMR" id="Q640I9"/>
<dbReference type="AGR" id="Xenbase:XB-GENE-990512"/>
<dbReference type="Xenbase" id="XB-GENE-990512">
    <property type="gene designation" value="kdm2b.L"/>
</dbReference>
<dbReference type="Proteomes" id="UP000186698">
    <property type="component" value="Unplaced"/>
</dbReference>
<dbReference type="GO" id="GO:0005694">
    <property type="term" value="C:chromosome"/>
    <property type="evidence" value="ECO:0007669"/>
    <property type="project" value="UniProtKB-SubCell"/>
</dbReference>
<dbReference type="GO" id="GO:0005730">
    <property type="term" value="C:nucleolus"/>
    <property type="evidence" value="ECO:0007669"/>
    <property type="project" value="UniProtKB-SubCell"/>
</dbReference>
<dbReference type="GO" id="GO:0005634">
    <property type="term" value="C:nucleus"/>
    <property type="evidence" value="ECO:0000250"/>
    <property type="project" value="UniProtKB"/>
</dbReference>
<dbReference type="GO" id="GO:0032452">
    <property type="term" value="F:histone demethylase activity"/>
    <property type="evidence" value="ECO:0000318"/>
    <property type="project" value="GO_Central"/>
</dbReference>
<dbReference type="GO" id="GO:0051864">
    <property type="term" value="F:histone H3K36 demethylase activity"/>
    <property type="evidence" value="ECO:0000250"/>
    <property type="project" value="UniProtKB"/>
</dbReference>
<dbReference type="GO" id="GO:0140680">
    <property type="term" value="F:histone H3K36me/H3K36me2 demethylase activity"/>
    <property type="evidence" value="ECO:0007669"/>
    <property type="project" value="UniProtKB-EC"/>
</dbReference>
<dbReference type="GO" id="GO:0019843">
    <property type="term" value="F:rRNA binding"/>
    <property type="evidence" value="ECO:0007669"/>
    <property type="project" value="UniProtKB-KW"/>
</dbReference>
<dbReference type="GO" id="GO:0003712">
    <property type="term" value="F:transcription coregulator activity"/>
    <property type="evidence" value="ECO:0000318"/>
    <property type="project" value="GO_Central"/>
</dbReference>
<dbReference type="GO" id="GO:0045322">
    <property type="term" value="F:unmethylated CpG binding"/>
    <property type="evidence" value="ECO:0000250"/>
    <property type="project" value="UniProtKB"/>
</dbReference>
<dbReference type="GO" id="GO:0008270">
    <property type="term" value="F:zinc ion binding"/>
    <property type="evidence" value="ECO:0000250"/>
    <property type="project" value="UniProtKB"/>
</dbReference>
<dbReference type="GO" id="GO:0006338">
    <property type="term" value="P:chromatin remodeling"/>
    <property type="evidence" value="ECO:0000318"/>
    <property type="project" value="GO_Central"/>
</dbReference>
<dbReference type="GO" id="GO:0006357">
    <property type="term" value="P:regulation of transcription by RNA polymerase II"/>
    <property type="evidence" value="ECO:0000318"/>
    <property type="project" value="GO_Central"/>
</dbReference>
<dbReference type="CDD" id="cd21785">
    <property type="entry name" value="CTD_KDM2B"/>
    <property type="match status" value="1"/>
</dbReference>
<dbReference type="CDD" id="cd22180">
    <property type="entry name" value="F-box_FBXL10"/>
    <property type="match status" value="1"/>
</dbReference>
<dbReference type="CDD" id="cd15644">
    <property type="entry name" value="PHD_KDM2B"/>
    <property type="match status" value="1"/>
</dbReference>
<dbReference type="FunFam" id="1.20.1280.50:FF:000083">
    <property type="entry name" value="Lysine (K)-specific demethylase 2B"/>
    <property type="match status" value="1"/>
</dbReference>
<dbReference type="FunFam" id="2.60.120.650:FF:000005">
    <property type="entry name" value="lysine-specific demethylase 2A isoform X1"/>
    <property type="match status" value="1"/>
</dbReference>
<dbReference type="FunFam" id="3.80.10.10:FF:000011">
    <property type="entry name" value="Lysine-specific demethylase 2B isoform X1"/>
    <property type="match status" value="1"/>
</dbReference>
<dbReference type="FunFam" id="3.30.40.10:FF:000020">
    <property type="entry name" value="lysine-specific demethylase 2B isoform X1"/>
    <property type="match status" value="1"/>
</dbReference>
<dbReference type="Gene3D" id="1.20.1280.50">
    <property type="match status" value="1"/>
</dbReference>
<dbReference type="Gene3D" id="1.20.58.1360">
    <property type="match status" value="1"/>
</dbReference>
<dbReference type="Gene3D" id="2.60.120.650">
    <property type="entry name" value="Cupin"/>
    <property type="match status" value="1"/>
</dbReference>
<dbReference type="Gene3D" id="3.80.10.10">
    <property type="entry name" value="Ribonuclease Inhibitor"/>
    <property type="match status" value="2"/>
</dbReference>
<dbReference type="Gene3D" id="3.30.40.10">
    <property type="entry name" value="Zinc/RING finger domain, C3HC4 (zinc finger)"/>
    <property type="match status" value="1"/>
</dbReference>
<dbReference type="InterPro" id="IPR001810">
    <property type="entry name" value="F-box_dom"/>
</dbReference>
<dbReference type="InterPro" id="IPR041070">
    <property type="entry name" value="JHD"/>
</dbReference>
<dbReference type="InterPro" id="IPR050690">
    <property type="entry name" value="JHDM1_Histone_Demethylase"/>
</dbReference>
<dbReference type="InterPro" id="IPR003347">
    <property type="entry name" value="JmjC_dom"/>
</dbReference>
<dbReference type="InterPro" id="IPR006553">
    <property type="entry name" value="Leu-rich_rpt_Cys-con_subtyp"/>
</dbReference>
<dbReference type="InterPro" id="IPR032675">
    <property type="entry name" value="LRR_dom_sf"/>
</dbReference>
<dbReference type="InterPro" id="IPR002857">
    <property type="entry name" value="Znf_CXXC"/>
</dbReference>
<dbReference type="InterPro" id="IPR011011">
    <property type="entry name" value="Znf_FYVE_PHD"/>
</dbReference>
<dbReference type="InterPro" id="IPR019787">
    <property type="entry name" value="Znf_PHD-finger"/>
</dbReference>
<dbReference type="InterPro" id="IPR013083">
    <property type="entry name" value="Znf_RING/FYVE/PHD"/>
</dbReference>
<dbReference type="PANTHER" id="PTHR23123">
    <property type="entry name" value="PHD/F-BOX CONTAINING PROTEIN"/>
    <property type="match status" value="1"/>
</dbReference>
<dbReference type="Pfam" id="PF12937">
    <property type="entry name" value="F-box-like"/>
    <property type="match status" value="1"/>
</dbReference>
<dbReference type="Pfam" id="PF17811">
    <property type="entry name" value="JHD"/>
    <property type="match status" value="1"/>
</dbReference>
<dbReference type="Pfam" id="PF02373">
    <property type="entry name" value="JmjC"/>
    <property type="match status" value="1"/>
</dbReference>
<dbReference type="Pfam" id="PF16866">
    <property type="entry name" value="PHD_4"/>
    <property type="match status" value="1"/>
</dbReference>
<dbReference type="Pfam" id="PF02008">
    <property type="entry name" value="zf-CXXC"/>
    <property type="match status" value="1"/>
</dbReference>
<dbReference type="SMART" id="SM00558">
    <property type="entry name" value="JmjC"/>
    <property type="match status" value="1"/>
</dbReference>
<dbReference type="SMART" id="SM00367">
    <property type="entry name" value="LRR_CC"/>
    <property type="match status" value="5"/>
</dbReference>
<dbReference type="SUPFAM" id="SSF51197">
    <property type="entry name" value="Clavaminate synthase-like"/>
    <property type="match status" value="1"/>
</dbReference>
<dbReference type="SUPFAM" id="SSF57903">
    <property type="entry name" value="FYVE/PHD zinc finger"/>
    <property type="match status" value="1"/>
</dbReference>
<dbReference type="SUPFAM" id="SSF52047">
    <property type="entry name" value="RNI-like"/>
    <property type="match status" value="1"/>
</dbReference>
<dbReference type="PROSITE" id="PS51184">
    <property type="entry name" value="JMJC"/>
    <property type="match status" value="1"/>
</dbReference>
<dbReference type="PROSITE" id="PS51058">
    <property type="entry name" value="ZF_CXXC"/>
    <property type="match status" value="1"/>
</dbReference>
<dbReference type="PROSITE" id="PS50016">
    <property type="entry name" value="ZF_PHD_2"/>
    <property type="match status" value="1"/>
</dbReference>
<reference key="1">
    <citation type="submission" date="2004-09" db="EMBL/GenBank/DDBJ databases">
        <authorList>
            <consortium name="NIH - Xenopus Gene Collection (XGC) project"/>
        </authorList>
    </citation>
    <scope>NUCLEOTIDE SEQUENCE [LARGE SCALE MRNA] (ISOFORMS 1 AND 2)</scope>
    <source>
        <tissue>Embryo</tissue>
    </source>
</reference>
<name>KDM2B_XENLA</name>
<evidence type="ECO:0000250" key="1"/>
<evidence type="ECO:0000250" key="2">
    <source>
        <dbReference type="UniProtKB" id="Q8NHM5"/>
    </source>
</evidence>
<evidence type="ECO:0000250" key="3">
    <source>
        <dbReference type="UniProtKB" id="Q9Y2K7"/>
    </source>
</evidence>
<evidence type="ECO:0000255" key="4"/>
<evidence type="ECO:0000255" key="5">
    <source>
        <dbReference type="PROSITE-ProRule" id="PRU00146"/>
    </source>
</evidence>
<evidence type="ECO:0000255" key="6">
    <source>
        <dbReference type="PROSITE-ProRule" id="PRU00509"/>
    </source>
</evidence>
<evidence type="ECO:0000255" key="7">
    <source>
        <dbReference type="PROSITE-ProRule" id="PRU00538"/>
    </source>
</evidence>
<evidence type="ECO:0000256" key="8">
    <source>
        <dbReference type="SAM" id="MobiDB-lite"/>
    </source>
</evidence>
<evidence type="ECO:0000303" key="9">
    <source ref="1"/>
</evidence>
<evidence type="ECO:0000305" key="10"/>
<protein>
    <recommendedName>
        <fullName>Lysine-specific demethylase 2B</fullName>
        <ecNumber evidence="2">1.14.11.27</ecNumber>
    </recommendedName>
    <alternativeName>
        <fullName>F-box and leucine-rich repeat protein 10</fullName>
    </alternativeName>
    <alternativeName>
        <fullName>F-box/LRR-repeat protein 10</fullName>
    </alternativeName>
    <alternativeName>
        <fullName>JmjC domain-containing histone demethylation protein 1B</fullName>
    </alternativeName>
    <alternativeName>
        <fullName>[Histone-H3]-lysine-36 demethylase 1B</fullName>
    </alternativeName>
</protein>
<gene>
    <name type="primary">kdm2b</name>
    <name type="synonym">fbxl10</name>
    <name type="synonym">jhdm1b</name>
</gene>
<feature type="chain" id="PRO_0000226786" description="Lysine-specific demethylase 2B">
    <location>
        <begin position="1"/>
        <end position="1259"/>
    </location>
</feature>
<feature type="domain" description="JmjC" evidence="7">
    <location>
        <begin position="147"/>
        <end position="315"/>
    </location>
</feature>
<feature type="domain" description="F-box">
    <location>
        <begin position="985"/>
        <end position="1030"/>
    </location>
</feature>
<feature type="repeat" description="LRR 1">
    <location>
        <begin position="1056"/>
        <end position="1081"/>
    </location>
</feature>
<feature type="repeat" description="LRR 2">
    <location>
        <begin position="1082"/>
        <end position="1105"/>
    </location>
</feature>
<feature type="repeat" description="LRR 3">
    <location>
        <begin position="1145"/>
        <end position="1170"/>
    </location>
</feature>
<feature type="repeat" description="LRR 4">
    <location>
        <begin position="1171"/>
        <end position="1200"/>
    </location>
</feature>
<feature type="repeat" description="LRR 5">
    <location>
        <begin position="1201"/>
        <end position="1225"/>
    </location>
</feature>
<feature type="zinc finger region" description="CXXC-type" evidence="6">
    <location>
        <begin position="567"/>
        <end position="613"/>
    </location>
</feature>
<feature type="zinc finger region" description="PHD-type" evidence="5">
    <location>
        <begin position="620"/>
        <end position="686"/>
    </location>
</feature>
<feature type="region of interest" description="Disordered" evidence="8">
    <location>
        <begin position="388"/>
        <end position="463"/>
    </location>
</feature>
<feature type="region of interest" description="Disordered" evidence="8">
    <location>
        <begin position="536"/>
        <end position="562"/>
    </location>
</feature>
<feature type="region of interest" description="Disordered" evidence="8">
    <location>
        <begin position="729"/>
        <end position="958"/>
    </location>
</feature>
<feature type="coiled-coil region" evidence="4">
    <location>
        <begin position="864"/>
        <end position="891"/>
    </location>
</feature>
<feature type="compositionally biased region" description="Basic and acidic residues" evidence="8">
    <location>
        <begin position="388"/>
        <end position="402"/>
    </location>
</feature>
<feature type="compositionally biased region" description="Polar residues" evidence="8">
    <location>
        <begin position="403"/>
        <end position="413"/>
    </location>
</feature>
<feature type="compositionally biased region" description="Basic and acidic residues" evidence="8">
    <location>
        <begin position="414"/>
        <end position="423"/>
    </location>
</feature>
<feature type="compositionally biased region" description="Polar residues" evidence="8">
    <location>
        <begin position="426"/>
        <end position="437"/>
    </location>
</feature>
<feature type="compositionally biased region" description="Basic residues" evidence="8">
    <location>
        <begin position="536"/>
        <end position="548"/>
    </location>
</feature>
<feature type="compositionally biased region" description="Basic and acidic residues" evidence="8">
    <location>
        <begin position="729"/>
        <end position="763"/>
    </location>
</feature>
<feature type="compositionally biased region" description="Basic and acidic residues" evidence="8">
    <location>
        <begin position="771"/>
        <end position="790"/>
    </location>
</feature>
<feature type="compositionally biased region" description="Polar residues" evidence="8">
    <location>
        <begin position="835"/>
        <end position="848"/>
    </location>
</feature>
<feature type="compositionally biased region" description="Basic residues" evidence="8">
    <location>
        <begin position="854"/>
        <end position="863"/>
    </location>
</feature>
<feature type="compositionally biased region" description="Basic and acidic residues" evidence="8">
    <location>
        <begin position="864"/>
        <end position="877"/>
    </location>
</feature>
<feature type="compositionally biased region" description="Polar residues" evidence="8">
    <location>
        <begin position="878"/>
        <end position="889"/>
    </location>
</feature>
<feature type="compositionally biased region" description="Basic and acidic residues" evidence="8">
    <location>
        <begin position="890"/>
        <end position="908"/>
    </location>
</feature>
<feature type="binding site" evidence="1">
    <location>
        <position position="208"/>
    </location>
    <ligand>
        <name>substrate</name>
    </ligand>
</feature>
<feature type="binding site" evidence="7">
    <location>
        <position position="211"/>
    </location>
    <ligand>
        <name>Fe cation</name>
        <dbReference type="ChEBI" id="CHEBI:24875"/>
        <note>catalytic</note>
    </ligand>
</feature>
<feature type="binding site" evidence="7">
    <location>
        <position position="213"/>
    </location>
    <ligand>
        <name>Fe cation</name>
        <dbReference type="ChEBI" id="CHEBI:24875"/>
        <note>catalytic</note>
    </ligand>
</feature>
<feature type="binding site" evidence="1">
    <location>
        <position position="228"/>
    </location>
    <ligand>
        <name>substrate</name>
    </ligand>
</feature>
<feature type="binding site" evidence="7">
    <location>
        <position position="283"/>
    </location>
    <ligand>
        <name>Fe cation</name>
        <dbReference type="ChEBI" id="CHEBI:24875"/>
        <note>catalytic</note>
    </ligand>
</feature>
<feature type="binding site" evidence="6">
    <location>
        <position position="574"/>
    </location>
    <ligand>
        <name>Zn(2+)</name>
        <dbReference type="ChEBI" id="CHEBI:29105"/>
        <label>1</label>
    </ligand>
</feature>
<feature type="binding site" evidence="6">
    <location>
        <position position="577"/>
    </location>
    <ligand>
        <name>Zn(2+)</name>
        <dbReference type="ChEBI" id="CHEBI:29105"/>
        <label>1</label>
    </ligand>
</feature>
<feature type="binding site" evidence="6">
    <location>
        <position position="580"/>
    </location>
    <ligand>
        <name>Zn(2+)</name>
        <dbReference type="ChEBI" id="CHEBI:29105"/>
        <label>1</label>
    </ligand>
</feature>
<feature type="binding site" evidence="6">
    <location>
        <position position="585"/>
    </location>
    <ligand>
        <name>Zn(2+)</name>
        <dbReference type="ChEBI" id="CHEBI:29105"/>
        <label>2</label>
    </ligand>
</feature>
<feature type="binding site" evidence="6">
    <location>
        <position position="588"/>
    </location>
    <ligand>
        <name>Zn(2+)</name>
        <dbReference type="ChEBI" id="CHEBI:29105"/>
        <label>2</label>
    </ligand>
</feature>
<feature type="binding site" evidence="6">
    <location>
        <position position="591"/>
    </location>
    <ligand>
        <name>Zn(2+)</name>
        <dbReference type="ChEBI" id="CHEBI:29105"/>
        <label>2</label>
    </ligand>
</feature>
<feature type="binding site" evidence="6">
    <location>
        <position position="607"/>
    </location>
    <ligand>
        <name>Zn(2+)</name>
        <dbReference type="ChEBI" id="CHEBI:29105"/>
        <label>2</label>
    </ligand>
</feature>
<feature type="binding site" evidence="6">
    <location>
        <position position="612"/>
    </location>
    <ligand>
        <name>Zn(2+)</name>
        <dbReference type="ChEBI" id="CHEBI:29105"/>
        <label>1</label>
    </ligand>
</feature>
<feature type="binding site" evidence="2">
    <location>
        <position position="623"/>
    </location>
    <ligand>
        <name>Zn(2+)</name>
        <dbReference type="ChEBI" id="CHEBI:29105"/>
    </ligand>
</feature>
<feature type="binding site" evidence="2">
    <location>
        <position position="626"/>
    </location>
    <ligand>
        <name>Zn(2+)</name>
        <dbReference type="ChEBI" id="CHEBI:29105"/>
    </ligand>
</feature>
<feature type="binding site" evidence="2">
    <location>
        <position position="649"/>
    </location>
    <ligand>
        <name>Zn(2+)</name>
        <dbReference type="ChEBI" id="CHEBI:29105"/>
    </ligand>
</feature>
<feature type="binding site" evidence="2">
    <location>
        <position position="652"/>
    </location>
    <ligand>
        <name>Zn(2+)</name>
        <dbReference type="ChEBI" id="CHEBI:29105"/>
    </ligand>
</feature>
<feature type="binding site" evidence="2">
    <location>
        <position position="657"/>
    </location>
    <ligand>
        <name>Zn(2+)</name>
        <dbReference type="ChEBI" id="CHEBI:29105"/>
    </ligand>
</feature>
<feature type="binding site" evidence="2">
    <location>
        <position position="660"/>
    </location>
    <ligand>
        <name>Zn(2+)</name>
        <dbReference type="ChEBI" id="CHEBI:29105"/>
    </ligand>
</feature>
<feature type="binding site" evidence="2">
    <location>
        <position position="680"/>
    </location>
    <ligand>
        <name>Zn(2+)</name>
        <dbReference type="ChEBI" id="CHEBI:29105"/>
    </ligand>
</feature>
<feature type="binding site" evidence="2">
    <location>
        <position position="683"/>
    </location>
    <ligand>
        <name>Zn(2+)</name>
        <dbReference type="ChEBI" id="CHEBI:29105"/>
    </ligand>
</feature>
<feature type="splice variant" id="VSP_017479" description="In isoform 2." evidence="9">
    <location>
        <begin position="1"/>
        <end position="521"/>
    </location>
</feature>
<feature type="splice variant" id="VSP_017480" description="In isoform 2." evidence="9">
    <original>NLAISGVPVVMWPKKPSK</original>
    <variation>MALSLSNDDEEYDSEQEQ</variation>
    <location>
        <begin position="522"/>
        <end position="539"/>
    </location>
</feature>
<feature type="sequence conflict" description="In Ref. 1; AAH73414." evidence="10" ref="1">
    <original>N</original>
    <variation>H</variation>
    <location>
        <position position="919"/>
    </location>
</feature>